<protein>
    <recommendedName>
        <fullName evidence="1">NAD kinase</fullName>
        <ecNumber evidence="1">2.7.1.23</ecNumber>
    </recommendedName>
    <alternativeName>
        <fullName evidence="1">ATP-dependent NAD kinase</fullName>
    </alternativeName>
</protein>
<accession>Q87RX6</accession>
<reference key="1">
    <citation type="journal article" date="2003" name="Lancet">
        <title>Genome sequence of Vibrio parahaemolyticus: a pathogenic mechanism distinct from that of V. cholerae.</title>
        <authorList>
            <person name="Makino K."/>
            <person name="Oshima K."/>
            <person name="Kurokawa K."/>
            <person name="Yokoyama K."/>
            <person name="Uda T."/>
            <person name="Tagomori K."/>
            <person name="Iijima Y."/>
            <person name="Najima M."/>
            <person name="Nakano M."/>
            <person name="Yamashita A."/>
            <person name="Kubota Y."/>
            <person name="Kimura S."/>
            <person name="Yasunaga T."/>
            <person name="Honda T."/>
            <person name="Shinagawa H."/>
            <person name="Hattori M."/>
            <person name="Iida T."/>
        </authorList>
    </citation>
    <scope>NUCLEOTIDE SEQUENCE [LARGE SCALE GENOMIC DNA]</scope>
    <source>
        <strain>RIMD 2210633</strain>
    </source>
</reference>
<proteinExistence type="inferred from homology"/>
<feature type="chain" id="PRO_0000120687" description="NAD kinase">
    <location>
        <begin position="1"/>
        <end position="294"/>
    </location>
</feature>
<feature type="active site" description="Proton acceptor" evidence="1">
    <location>
        <position position="74"/>
    </location>
</feature>
<feature type="binding site" evidence="1">
    <location>
        <begin position="74"/>
        <end position="75"/>
    </location>
    <ligand>
        <name>NAD(+)</name>
        <dbReference type="ChEBI" id="CHEBI:57540"/>
    </ligand>
</feature>
<feature type="binding site" evidence="1">
    <location>
        <begin position="148"/>
        <end position="149"/>
    </location>
    <ligand>
        <name>NAD(+)</name>
        <dbReference type="ChEBI" id="CHEBI:57540"/>
    </ligand>
</feature>
<feature type="binding site" evidence="1">
    <location>
        <position position="159"/>
    </location>
    <ligand>
        <name>NAD(+)</name>
        <dbReference type="ChEBI" id="CHEBI:57540"/>
    </ligand>
</feature>
<feature type="binding site" evidence="1">
    <location>
        <position position="176"/>
    </location>
    <ligand>
        <name>NAD(+)</name>
        <dbReference type="ChEBI" id="CHEBI:57540"/>
    </ligand>
</feature>
<feature type="binding site" evidence="1">
    <location>
        <position position="178"/>
    </location>
    <ligand>
        <name>NAD(+)</name>
        <dbReference type="ChEBI" id="CHEBI:57540"/>
    </ligand>
</feature>
<feature type="binding site" evidence="1">
    <location>
        <begin position="189"/>
        <end position="194"/>
    </location>
    <ligand>
        <name>NAD(+)</name>
        <dbReference type="ChEBI" id="CHEBI:57540"/>
    </ligand>
</feature>
<feature type="binding site" evidence="1">
    <location>
        <position position="249"/>
    </location>
    <ligand>
        <name>NAD(+)</name>
        <dbReference type="ChEBI" id="CHEBI:57540"/>
    </ligand>
</feature>
<comment type="function">
    <text evidence="1">Involved in the regulation of the intracellular balance of NAD and NADP, and is a key enzyme in the biosynthesis of NADP. Catalyzes specifically the phosphorylation on 2'-hydroxyl of the adenosine moiety of NAD to yield NADP.</text>
</comment>
<comment type="catalytic activity">
    <reaction evidence="1">
        <text>NAD(+) + ATP = ADP + NADP(+) + H(+)</text>
        <dbReference type="Rhea" id="RHEA:18629"/>
        <dbReference type="ChEBI" id="CHEBI:15378"/>
        <dbReference type="ChEBI" id="CHEBI:30616"/>
        <dbReference type="ChEBI" id="CHEBI:57540"/>
        <dbReference type="ChEBI" id="CHEBI:58349"/>
        <dbReference type="ChEBI" id="CHEBI:456216"/>
        <dbReference type="EC" id="2.7.1.23"/>
    </reaction>
</comment>
<comment type="cofactor">
    <cofactor evidence="1">
        <name>a divalent metal cation</name>
        <dbReference type="ChEBI" id="CHEBI:60240"/>
    </cofactor>
</comment>
<comment type="subcellular location">
    <subcellularLocation>
        <location evidence="1">Cytoplasm</location>
    </subcellularLocation>
</comment>
<comment type="similarity">
    <text evidence="1">Belongs to the NAD kinase family.</text>
</comment>
<evidence type="ECO:0000255" key="1">
    <source>
        <dbReference type="HAMAP-Rule" id="MF_00361"/>
    </source>
</evidence>
<gene>
    <name evidence="1" type="primary">nadK</name>
    <name type="ordered locus">VP0650</name>
</gene>
<keyword id="KW-0067">ATP-binding</keyword>
<keyword id="KW-0963">Cytoplasm</keyword>
<keyword id="KW-0418">Kinase</keyword>
<keyword id="KW-0520">NAD</keyword>
<keyword id="KW-0521">NADP</keyword>
<keyword id="KW-0547">Nucleotide-binding</keyword>
<keyword id="KW-0808">Transferase</keyword>
<sequence>MKNPCNVIAIIGKPRDQQAIQTHKELYEWLTSEGYKVFIDDRLAAILDEIPQNHFASLVELGKNADLAIVVGGDGNMLGAARILSRFDVPVIGVNRGNLGFLTDLNPDDFQAALKAVLAGEYIEEERFLLEAEVHRHGQIKSHNAALNEAVLHPGQIAHMIEFEVYIDESFAFSLRADGLIVSTPTGSTAYSLSGGGPILSPSLNAISLVPMFPHTLSSRPLVVDGKRRIKLIVSPENRGTQEVSCDGQVSLPVSPGDEIHIYQSPNVLKLIHPKDYSYYHVLRNKLGWSSKLF</sequence>
<organism>
    <name type="scientific">Vibrio parahaemolyticus serotype O3:K6 (strain RIMD 2210633)</name>
    <dbReference type="NCBI Taxonomy" id="223926"/>
    <lineage>
        <taxon>Bacteria</taxon>
        <taxon>Pseudomonadati</taxon>
        <taxon>Pseudomonadota</taxon>
        <taxon>Gammaproteobacteria</taxon>
        <taxon>Vibrionales</taxon>
        <taxon>Vibrionaceae</taxon>
        <taxon>Vibrio</taxon>
    </lineage>
</organism>
<name>NADK_VIBPA</name>
<dbReference type="EC" id="2.7.1.23" evidence="1"/>
<dbReference type="EMBL" id="BA000031">
    <property type="protein sequence ID" value="BAC58913.1"/>
    <property type="molecule type" value="Genomic_DNA"/>
</dbReference>
<dbReference type="RefSeq" id="NP_797029.1">
    <property type="nucleotide sequence ID" value="NC_004603.1"/>
</dbReference>
<dbReference type="RefSeq" id="WP_005455932.1">
    <property type="nucleotide sequence ID" value="NC_004603.1"/>
</dbReference>
<dbReference type="SMR" id="Q87RX6"/>
<dbReference type="GeneID" id="1188125"/>
<dbReference type="KEGG" id="vpa:VP0650"/>
<dbReference type="PATRIC" id="fig|223926.6.peg.619"/>
<dbReference type="eggNOG" id="COG0061">
    <property type="taxonomic scope" value="Bacteria"/>
</dbReference>
<dbReference type="HOGENOM" id="CLU_008831_0_1_6"/>
<dbReference type="Proteomes" id="UP000002493">
    <property type="component" value="Chromosome 1"/>
</dbReference>
<dbReference type="GO" id="GO:0005737">
    <property type="term" value="C:cytoplasm"/>
    <property type="evidence" value="ECO:0007669"/>
    <property type="project" value="UniProtKB-SubCell"/>
</dbReference>
<dbReference type="GO" id="GO:0005524">
    <property type="term" value="F:ATP binding"/>
    <property type="evidence" value="ECO:0007669"/>
    <property type="project" value="UniProtKB-KW"/>
</dbReference>
<dbReference type="GO" id="GO:0046872">
    <property type="term" value="F:metal ion binding"/>
    <property type="evidence" value="ECO:0007669"/>
    <property type="project" value="UniProtKB-UniRule"/>
</dbReference>
<dbReference type="GO" id="GO:0051287">
    <property type="term" value="F:NAD binding"/>
    <property type="evidence" value="ECO:0007669"/>
    <property type="project" value="UniProtKB-ARBA"/>
</dbReference>
<dbReference type="GO" id="GO:0003951">
    <property type="term" value="F:NAD+ kinase activity"/>
    <property type="evidence" value="ECO:0007669"/>
    <property type="project" value="UniProtKB-UniRule"/>
</dbReference>
<dbReference type="GO" id="GO:0019674">
    <property type="term" value="P:NAD metabolic process"/>
    <property type="evidence" value="ECO:0007669"/>
    <property type="project" value="InterPro"/>
</dbReference>
<dbReference type="GO" id="GO:0006741">
    <property type="term" value="P:NADP biosynthetic process"/>
    <property type="evidence" value="ECO:0007669"/>
    <property type="project" value="UniProtKB-UniRule"/>
</dbReference>
<dbReference type="FunFam" id="2.60.200.30:FF:000001">
    <property type="entry name" value="NAD kinase"/>
    <property type="match status" value="1"/>
</dbReference>
<dbReference type="Gene3D" id="3.40.50.10330">
    <property type="entry name" value="Probable inorganic polyphosphate/atp-NAD kinase, domain 1"/>
    <property type="match status" value="1"/>
</dbReference>
<dbReference type="Gene3D" id="2.60.200.30">
    <property type="entry name" value="Probable inorganic polyphosphate/atp-NAD kinase, domain 2"/>
    <property type="match status" value="1"/>
</dbReference>
<dbReference type="HAMAP" id="MF_00361">
    <property type="entry name" value="NAD_kinase"/>
    <property type="match status" value="1"/>
</dbReference>
<dbReference type="InterPro" id="IPR017438">
    <property type="entry name" value="ATP-NAD_kinase_N"/>
</dbReference>
<dbReference type="InterPro" id="IPR017437">
    <property type="entry name" value="ATP-NAD_kinase_PpnK-typ_C"/>
</dbReference>
<dbReference type="InterPro" id="IPR016064">
    <property type="entry name" value="NAD/diacylglycerol_kinase_sf"/>
</dbReference>
<dbReference type="InterPro" id="IPR002504">
    <property type="entry name" value="NADK"/>
</dbReference>
<dbReference type="NCBIfam" id="NF002306">
    <property type="entry name" value="PRK01231.1"/>
    <property type="match status" value="1"/>
</dbReference>
<dbReference type="NCBIfam" id="NF002893">
    <property type="entry name" value="PRK03378.1"/>
    <property type="match status" value="1"/>
</dbReference>
<dbReference type="PANTHER" id="PTHR20275">
    <property type="entry name" value="NAD KINASE"/>
    <property type="match status" value="1"/>
</dbReference>
<dbReference type="PANTHER" id="PTHR20275:SF0">
    <property type="entry name" value="NAD KINASE"/>
    <property type="match status" value="1"/>
</dbReference>
<dbReference type="Pfam" id="PF01513">
    <property type="entry name" value="NAD_kinase"/>
    <property type="match status" value="1"/>
</dbReference>
<dbReference type="Pfam" id="PF20143">
    <property type="entry name" value="NAD_kinase_C"/>
    <property type="match status" value="1"/>
</dbReference>
<dbReference type="SUPFAM" id="SSF111331">
    <property type="entry name" value="NAD kinase/diacylglycerol kinase-like"/>
    <property type="match status" value="1"/>
</dbReference>